<geneLocation type="mitochondrion"/>
<keyword id="KW-0067">ATP-binding</keyword>
<keyword id="KW-0138">CF(0)</keyword>
<keyword id="KW-0375">Hydrogen ion transport</keyword>
<keyword id="KW-0406">Ion transport</keyword>
<keyword id="KW-0446">Lipid-binding</keyword>
<keyword id="KW-0472">Membrane</keyword>
<keyword id="KW-0496">Mitochondrion</keyword>
<keyword id="KW-0547">Nucleotide-binding</keyword>
<keyword id="KW-0691">RNA editing</keyword>
<keyword id="KW-0812">Transmembrane</keyword>
<keyword id="KW-1133">Transmembrane helix</keyword>
<keyword id="KW-0813">Transport</keyword>
<feature type="chain" id="PRO_0000112210" description="ATP synthase subunit 9, mitochondrial">
    <location>
        <begin position="1"/>
        <end position="74"/>
    </location>
</feature>
<feature type="transmembrane region" description="Helical" evidence="2">
    <location>
        <begin position="8"/>
        <end position="28"/>
    </location>
</feature>
<feature type="transmembrane region" description="Helical" evidence="1">
    <location>
        <begin position="50"/>
        <end position="70"/>
    </location>
</feature>
<feature type="site" description="Reversibly protonated during proton transport" evidence="1">
    <location>
        <position position="57"/>
    </location>
</feature>
<dbReference type="EMBL" id="D13696">
    <property type="protein sequence ID" value="BAA02855.2"/>
    <property type="status" value="ALT_SEQ"/>
    <property type="molecule type" value="Genomic_DNA"/>
</dbReference>
<dbReference type="EMBL" id="X69319">
    <property type="protein sequence ID" value="CAA49160.1"/>
    <property type="status" value="ALT_SEQ"/>
    <property type="molecule type" value="Genomic_DNA"/>
</dbReference>
<dbReference type="SMR" id="P60113"/>
<dbReference type="GO" id="GO:0031966">
    <property type="term" value="C:mitochondrial membrane"/>
    <property type="evidence" value="ECO:0007669"/>
    <property type="project" value="UniProtKB-SubCell"/>
</dbReference>
<dbReference type="GO" id="GO:0045259">
    <property type="term" value="C:proton-transporting ATP synthase complex"/>
    <property type="evidence" value="ECO:0007669"/>
    <property type="project" value="UniProtKB-KW"/>
</dbReference>
<dbReference type="GO" id="GO:0033177">
    <property type="term" value="C:proton-transporting two-sector ATPase complex, proton-transporting domain"/>
    <property type="evidence" value="ECO:0007669"/>
    <property type="project" value="InterPro"/>
</dbReference>
<dbReference type="GO" id="GO:0005524">
    <property type="term" value="F:ATP binding"/>
    <property type="evidence" value="ECO:0007669"/>
    <property type="project" value="UniProtKB-KW"/>
</dbReference>
<dbReference type="GO" id="GO:0008289">
    <property type="term" value="F:lipid binding"/>
    <property type="evidence" value="ECO:0007669"/>
    <property type="project" value="UniProtKB-KW"/>
</dbReference>
<dbReference type="GO" id="GO:0015078">
    <property type="term" value="F:proton transmembrane transporter activity"/>
    <property type="evidence" value="ECO:0007669"/>
    <property type="project" value="InterPro"/>
</dbReference>
<dbReference type="GO" id="GO:0015986">
    <property type="term" value="P:proton motive force-driven ATP synthesis"/>
    <property type="evidence" value="ECO:0007669"/>
    <property type="project" value="InterPro"/>
</dbReference>
<dbReference type="CDD" id="cd18182">
    <property type="entry name" value="ATP-synt_Fo_c_ATP5G3"/>
    <property type="match status" value="1"/>
</dbReference>
<dbReference type="FunFam" id="1.20.20.10:FF:000005">
    <property type="entry name" value="ATP synthase subunit 9, mitochondrial"/>
    <property type="match status" value="1"/>
</dbReference>
<dbReference type="Gene3D" id="1.20.20.10">
    <property type="entry name" value="F1F0 ATP synthase subunit C"/>
    <property type="match status" value="1"/>
</dbReference>
<dbReference type="HAMAP" id="MF_01396">
    <property type="entry name" value="ATP_synth_c_bact"/>
    <property type="match status" value="1"/>
</dbReference>
<dbReference type="InterPro" id="IPR000454">
    <property type="entry name" value="ATP_synth_F0_csu"/>
</dbReference>
<dbReference type="InterPro" id="IPR020537">
    <property type="entry name" value="ATP_synth_F0_csu_DDCD_BS"/>
</dbReference>
<dbReference type="InterPro" id="IPR038662">
    <property type="entry name" value="ATP_synth_F0_csu_sf"/>
</dbReference>
<dbReference type="InterPro" id="IPR002379">
    <property type="entry name" value="ATPase_proteolipid_c-like_dom"/>
</dbReference>
<dbReference type="InterPro" id="IPR035921">
    <property type="entry name" value="F/V-ATP_Csub_sf"/>
</dbReference>
<dbReference type="PANTHER" id="PTHR10031">
    <property type="entry name" value="ATP SYNTHASE LIPID-BINDING PROTEIN, MITOCHONDRIAL"/>
    <property type="match status" value="1"/>
</dbReference>
<dbReference type="PANTHER" id="PTHR10031:SF57">
    <property type="entry name" value="ATP SYNTHASE SUBUNIT 9, MITOCHONDRIAL"/>
    <property type="match status" value="1"/>
</dbReference>
<dbReference type="Pfam" id="PF00137">
    <property type="entry name" value="ATP-synt_C"/>
    <property type="match status" value="1"/>
</dbReference>
<dbReference type="PRINTS" id="PR00124">
    <property type="entry name" value="ATPASEC"/>
</dbReference>
<dbReference type="SUPFAM" id="SSF81333">
    <property type="entry name" value="F1F0 ATP synthase subunit C"/>
    <property type="match status" value="1"/>
</dbReference>
<dbReference type="PROSITE" id="PS00605">
    <property type="entry name" value="ATPASE_C"/>
    <property type="match status" value="1"/>
</dbReference>
<proteinExistence type="evidence at transcript level"/>
<gene>
    <name type="primary">ATP9</name>
</gene>
<protein>
    <recommendedName>
        <fullName>ATP synthase subunit 9, mitochondrial</fullName>
    </recommendedName>
    <alternativeName>
        <fullName>Lipid-binding protein</fullName>
    </alternativeName>
</protein>
<evidence type="ECO:0000250" key="1"/>
<evidence type="ECO:0000255" key="2"/>
<evidence type="ECO:0000305" key="3"/>
<sequence>MLEGAKSIGAGAATIASAGAAIGIGNVFSSLIHSVARNPSLAKQSFGYAILGFALTEAIALFAPMMAFLILFVF</sequence>
<organism>
    <name type="scientific">Brassica napus</name>
    <name type="common">Rape</name>
    <dbReference type="NCBI Taxonomy" id="3708"/>
    <lineage>
        <taxon>Eukaryota</taxon>
        <taxon>Viridiplantae</taxon>
        <taxon>Streptophyta</taxon>
        <taxon>Embryophyta</taxon>
        <taxon>Tracheophyta</taxon>
        <taxon>Spermatophyta</taxon>
        <taxon>Magnoliopsida</taxon>
        <taxon>eudicotyledons</taxon>
        <taxon>Gunneridae</taxon>
        <taxon>Pentapetalae</taxon>
        <taxon>rosids</taxon>
        <taxon>malvids</taxon>
        <taxon>Brassicales</taxon>
        <taxon>Brassicaceae</taxon>
        <taxon>Brassiceae</taxon>
        <taxon>Brassica</taxon>
    </lineage>
</organism>
<accession>P60113</accession>
<accession>Q08366</accession>
<name>ATP9_BRANA</name>
<reference key="1">
    <citation type="journal article" date="1993" name="Jpn. J. Genet.">
        <title>RNA editing of rapeseed mitochondrial atp9 transcripts: RNA editing changes four amino acids, but termination codon is already encoded by genomic sequence.</title>
        <authorList>
            <person name="Handa H."/>
        </authorList>
    </citation>
    <scope>NUCLEOTIDE SEQUENCE [GENOMIC DNA]</scope>
    <source>
        <strain>cv. Isuzu-natane</strain>
    </source>
</reference>
<reference key="2">
    <citation type="submission" date="1992-11" db="EMBL/GenBank/DDBJ databases">
        <authorList>
            <person name="Albaum M."/>
            <person name="Abel W.O."/>
        </authorList>
    </citation>
    <scope>NUCLEOTIDE SEQUENCE [GENOMIC DNA]</scope>
    <source>
        <tissue>Leaf</tissue>
    </source>
</reference>
<comment type="function">
    <text>This protein is one of the chains of the nonenzymatic membrane component (F0) of mitochondrial ATPase.</text>
</comment>
<comment type="subunit">
    <text evidence="1">F-type ATPases have 2 components, CF(1) - the catalytic core - and CF(0) - the membrane proton channel. CF(1) has five subunits: alpha(3), beta(3), gamma(1), delta(1), epsilon(1). CF(0) has three main subunits: a, b and c (By similarity).</text>
</comment>
<comment type="subcellular location">
    <subcellularLocation>
        <location evidence="3">Mitochondrion membrane</location>
        <topology evidence="3">Multi-pass membrane protein</topology>
    </subcellularLocation>
</comment>
<comment type="RNA editing">
    <location>
        <position position="7"/>
    </location>
    <location>
        <position position="17"/>
    </location>
    <location>
        <position position="45"/>
    </location>
    <location>
        <position position="64"/>
    </location>
</comment>
<comment type="similarity">
    <text evidence="3">Belongs to the ATPase C chain family.</text>
</comment>